<reference key="1">
    <citation type="journal article" date="2009" name="PLoS Genet.">
        <title>Organised genome dynamics in the Escherichia coli species results in highly diverse adaptive paths.</title>
        <authorList>
            <person name="Touchon M."/>
            <person name="Hoede C."/>
            <person name="Tenaillon O."/>
            <person name="Barbe V."/>
            <person name="Baeriswyl S."/>
            <person name="Bidet P."/>
            <person name="Bingen E."/>
            <person name="Bonacorsi S."/>
            <person name="Bouchier C."/>
            <person name="Bouvet O."/>
            <person name="Calteau A."/>
            <person name="Chiapello H."/>
            <person name="Clermont O."/>
            <person name="Cruveiller S."/>
            <person name="Danchin A."/>
            <person name="Diard M."/>
            <person name="Dossat C."/>
            <person name="Karoui M.E."/>
            <person name="Frapy E."/>
            <person name="Garry L."/>
            <person name="Ghigo J.M."/>
            <person name="Gilles A.M."/>
            <person name="Johnson J."/>
            <person name="Le Bouguenec C."/>
            <person name="Lescat M."/>
            <person name="Mangenot S."/>
            <person name="Martinez-Jehanne V."/>
            <person name="Matic I."/>
            <person name="Nassif X."/>
            <person name="Oztas S."/>
            <person name="Petit M.A."/>
            <person name="Pichon C."/>
            <person name="Rouy Z."/>
            <person name="Ruf C.S."/>
            <person name="Schneider D."/>
            <person name="Tourret J."/>
            <person name="Vacherie B."/>
            <person name="Vallenet D."/>
            <person name="Medigue C."/>
            <person name="Rocha E.P.C."/>
            <person name="Denamur E."/>
        </authorList>
    </citation>
    <scope>NUCLEOTIDE SEQUENCE [LARGE SCALE GENOMIC DNA]</scope>
    <source>
        <strain>UMN026 / ExPEC</strain>
    </source>
</reference>
<evidence type="ECO:0000255" key="1">
    <source>
        <dbReference type="HAMAP-Rule" id="MF_00758"/>
    </source>
</evidence>
<comment type="similarity">
    <text evidence="1">Belongs to the UPF0301 (AlgH) family.</text>
</comment>
<gene>
    <name evidence="1" type="primary">yqgE</name>
    <name type="ordered locus">ECUMN_3300</name>
</gene>
<accession>B7N7K1</accession>
<dbReference type="EMBL" id="CU928163">
    <property type="protein sequence ID" value="CAR14463.1"/>
    <property type="molecule type" value="Genomic_DNA"/>
</dbReference>
<dbReference type="RefSeq" id="WP_001053178.1">
    <property type="nucleotide sequence ID" value="NC_011751.1"/>
</dbReference>
<dbReference type="RefSeq" id="YP_002413982.1">
    <property type="nucleotide sequence ID" value="NC_011751.1"/>
</dbReference>
<dbReference type="SMR" id="B7N7K1"/>
<dbReference type="STRING" id="585056.ECUMN_3300"/>
<dbReference type="KEGG" id="eum:ECUMN_3300"/>
<dbReference type="PATRIC" id="fig|585056.7.peg.3478"/>
<dbReference type="HOGENOM" id="CLU_057596_1_0_6"/>
<dbReference type="Proteomes" id="UP000007097">
    <property type="component" value="Chromosome"/>
</dbReference>
<dbReference type="GO" id="GO:0005829">
    <property type="term" value="C:cytosol"/>
    <property type="evidence" value="ECO:0007669"/>
    <property type="project" value="TreeGrafter"/>
</dbReference>
<dbReference type="FunFam" id="3.30.70.1300:FF:000001">
    <property type="entry name" value="UPF0301 protein YqgE"/>
    <property type="match status" value="1"/>
</dbReference>
<dbReference type="Gene3D" id="3.40.1740.10">
    <property type="entry name" value="VC0467-like"/>
    <property type="match status" value="1"/>
</dbReference>
<dbReference type="Gene3D" id="3.30.70.1300">
    <property type="entry name" value="VC0467-like domains"/>
    <property type="match status" value="1"/>
</dbReference>
<dbReference type="HAMAP" id="MF_00758">
    <property type="entry name" value="UPF0301"/>
    <property type="match status" value="1"/>
</dbReference>
<dbReference type="InterPro" id="IPR003774">
    <property type="entry name" value="AlgH-like"/>
</dbReference>
<dbReference type="NCBIfam" id="NF001266">
    <property type="entry name" value="PRK00228.1-1"/>
    <property type="match status" value="1"/>
</dbReference>
<dbReference type="PANTHER" id="PTHR30327">
    <property type="entry name" value="UNCHARACTERIZED PROTEIN YQGE"/>
    <property type="match status" value="1"/>
</dbReference>
<dbReference type="PANTHER" id="PTHR30327:SF1">
    <property type="entry name" value="UPF0301 PROTEIN YQGE"/>
    <property type="match status" value="1"/>
</dbReference>
<dbReference type="Pfam" id="PF02622">
    <property type="entry name" value="DUF179"/>
    <property type="match status" value="1"/>
</dbReference>
<dbReference type="SUPFAM" id="SSF143456">
    <property type="entry name" value="VC0467-like"/>
    <property type="match status" value="1"/>
</dbReference>
<feature type="chain" id="PRO_1000198272" description="UPF0301 protein YqgE">
    <location>
        <begin position="1"/>
        <end position="187"/>
    </location>
</feature>
<name>YQGE_ECOLU</name>
<proteinExistence type="inferred from homology"/>
<organism>
    <name type="scientific">Escherichia coli O17:K52:H18 (strain UMN026 / ExPEC)</name>
    <dbReference type="NCBI Taxonomy" id="585056"/>
    <lineage>
        <taxon>Bacteria</taxon>
        <taxon>Pseudomonadati</taxon>
        <taxon>Pseudomonadota</taxon>
        <taxon>Gammaproteobacteria</taxon>
        <taxon>Enterobacterales</taxon>
        <taxon>Enterobacteriaceae</taxon>
        <taxon>Escherichia</taxon>
    </lineage>
</organism>
<sequence length="187" mass="20686">MNLQHHFLIAMPALQDPIFRRSVVYICEHNTNGAMGIIVNKPLENLKIEGILEKLKITPEPRDESIRLDKPVMLGGPLAEDRGFILHTPPSNFASSIRISDNTVMTTSRDVLETLGTDKQPSDVLVALGYASWEKGQLEQEILDNAWLTAPADLNILFKTPIADRWREAAKLIGVDILTMPGVAGHA</sequence>
<protein>
    <recommendedName>
        <fullName evidence="1">UPF0301 protein YqgE</fullName>
    </recommendedName>
</protein>